<sequence length="234" mass="26161">MAAAVPVPQFRPVTPLIFDLDGLILNTEDLYTDVFEEICNRYGKKYNWDVKSLVMGKKALETAQTIVEFLNLPISKEELLKESQEKLQMVLHTAGFMPGAEELIHHLKKHRLPFALATSSETVTFQTKTSRHTGFFGLFHHIVLGDDPEVKNGKPGMDIFLTCAKRFSPPPDPKDCLVFEDSPNGVEAAIHCGMQVVMVPHENLSADLTRKATLVLSSLHDFKPELFGLPAFTE</sequence>
<dbReference type="EC" id="3.1.3.96"/>
<dbReference type="EMBL" id="AK007231">
    <property type="protein sequence ID" value="BAB24906.1"/>
    <property type="molecule type" value="mRNA"/>
</dbReference>
<dbReference type="EMBL" id="AK014922">
    <property type="protein sequence ID" value="BAB29622.1"/>
    <property type="molecule type" value="mRNA"/>
</dbReference>
<dbReference type="EMBL" id="BC048447">
    <property type="protein sequence ID" value="AAH48447.1"/>
    <property type="molecule type" value="mRNA"/>
</dbReference>
<dbReference type="CCDS" id="CCDS29244.1"/>
<dbReference type="RefSeq" id="NP_080384.2">
    <property type="nucleotide sequence ID" value="NM_026108.3"/>
</dbReference>
<dbReference type="SMR" id="Q9D5U5"/>
<dbReference type="BioGRID" id="212136">
    <property type="interactions" value="1"/>
</dbReference>
<dbReference type="FunCoup" id="Q9D5U5">
    <property type="interactions" value="233"/>
</dbReference>
<dbReference type="STRING" id="10090.ENSMUSP00000057378"/>
<dbReference type="PhosphoSitePlus" id="Q9D5U5"/>
<dbReference type="jPOST" id="Q9D5U5"/>
<dbReference type="PaxDb" id="10090-ENSMUSP00000057378"/>
<dbReference type="ProteomicsDB" id="269686"/>
<dbReference type="DNASU" id="67365"/>
<dbReference type="GeneID" id="67365"/>
<dbReference type="KEGG" id="mmu:67365"/>
<dbReference type="UCSC" id="uc008ewy.2">
    <property type="organism name" value="mouse"/>
</dbReference>
<dbReference type="AGR" id="MGI:1914615"/>
<dbReference type="CTD" id="8226"/>
<dbReference type="MGI" id="MGI:1914615">
    <property type="gene designation" value="Pudp"/>
</dbReference>
<dbReference type="eggNOG" id="KOG2914">
    <property type="taxonomic scope" value="Eukaryota"/>
</dbReference>
<dbReference type="InParanoid" id="Q9D5U5"/>
<dbReference type="OrthoDB" id="40579at2759"/>
<dbReference type="PhylomeDB" id="Q9D5U5"/>
<dbReference type="TreeFam" id="TF105946"/>
<dbReference type="Reactome" id="R-MMU-73614">
    <property type="pathway name" value="Pyrimidine salvage"/>
</dbReference>
<dbReference type="BioGRID-ORCS" id="67365">
    <property type="hits" value="2 hits in 78 CRISPR screens"/>
</dbReference>
<dbReference type="PRO" id="PR:Q9D5U5"/>
<dbReference type="Proteomes" id="UP000000589">
    <property type="component" value="Unplaced"/>
</dbReference>
<dbReference type="RNAct" id="Q9D5U5">
    <property type="molecule type" value="protein"/>
</dbReference>
<dbReference type="GO" id="GO:0046872">
    <property type="term" value="F:metal ion binding"/>
    <property type="evidence" value="ECO:0007669"/>
    <property type="project" value="UniProtKB-KW"/>
</dbReference>
<dbReference type="GO" id="GO:1990738">
    <property type="term" value="F:pseudouridine 5'-phosphatase activity"/>
    <property type="evidence" value="ECO:0007669"/>
    <property type="project" value="UniProtKB-EC"/>
</dbReference>
<dbReference type="GO" id="GO:0009117">
    <property type="term" value="P:nucleotide metabolic process"/>
    <property type="evidence" value="ECO:0007669"/>
    <property type="project" value="UniProtKB-KW"/>
</dbReference>
<dbReference type="CDD" id="cd07529">
    <property type="entry name" value="HAD_AtGPP-like"/>
    <property type="match status" value="1"/>
</dbReference>
<dbReference type="FunFam" id="1.10.150.240:FF:000001">
    <property type="entry name" value="Haloacid dehalogenase-like hydrolase domain"/>
    <property type="match status" value="1"/>
</dbReference>
<dbReference type="FunFam" id="3.40.50.1000:FF:000055">
    <property type="entry name" value="Haloacid dehalogenase-like hydrolase family protein"/>
    <property type="match status" value="1"/>
</dbReference>
<dbReference type="Gene3D" id="3.40.50.1000">
    <property type="entry name" value="HAD superfamily/HAD-like"/>
    <property type="match status" value="1"/>
</dbReference>
<dbReference type="Gene3D" id="1.10.150.240">
    <property type="entry name" value="Putative phosphatase, domain 2"/>
    <property type="match status" value="1"/>
</dbReference>
<dbReference type="InterPro" id="IPR045228">
    <property type="entry name" value="Gpp1/Gpp2-like"/>
</dbReference>
<dbReference type="InterPro" id="IPR036412">
    <property type="entry name" value="HAD-like_sf"/>
</dbReference>
<dbReference type="InterPro" id="IPR006439">
    <property type="entry name" value="HAD-SF_hydro_IA"/>
</dbReference>
<dbReference type="InterPro" id="IPR041492">
    <property type="entry name" value="HAD_2"/>
</dbReference>
<dbReference type="InterPro" id="IPR023214">
    <property type="entry name" value="HAD_sf"/>
</dbReference>
<dbReference type="InterPro" id="IPR023198">
    <property type="entry name" value="PGP-like_dom2"/>
</dbReference>
<dbReference type="NCBIfam" id="TIGR01509">
    <property type="entry name" value="HAD-SF-IA-v3"/>
    <property type="match status" value="1"/>
</dbReference>
<dbReference type="PANTHER" id="PTHR18901">
    <property type="entry name" value="2-DEOXYGLUCOSE-6-PHOSPHATE PHOSPHATASE 2"/>
    <property type="match status" value="1"/>
</dbReference>
<dbReference type="PANTHER" id="PTHR18901:SF38">
    <property type="entry name" value="PSEUDOURIDINE-5'-PHOSPHATASE"/>
    <property type="match status" value="1"/>
</dbReference>
<dbReference type="Pfam" id="PF13419">
    <property type="entry name" value="HAD_2"/>
    <property type="match status" value="1"/>
</dbReference>
<dbReference type="SFLD" id="SFLDG01135">
    <property type="entry name" value="C1.5.6:_HAD__Beta-PGM__Phospha"/>
    <property type="match status" value="1"/>
</dbReference>
<dbReference type="SFLD" id="SFLDG01129">
    <property type="entry name" value="C1.5:_HAD__Beta-PGM__Phosphata"/>
    <property type="match status" value="1"/>
</dbReference>
<dbReference type="SUPFAM" id="SSF56784">
    <property type="entry name" value="HAD-like"/>
    <property type="match status" value="1"/>
</dbReference>
<keyword id="KW-0378">Hydrolase</keyword>
<keyword id="KW-0460">Magnesium</keyword>
<keyword id="KW-0479">Metal-binding</keyword>
<keyword id="KW-0546">Nucleotide metabolism</keyword>
<keyword id="KW-1185">Reference proteome</keyword>
<comment type="function">
    <text evidence="2">Dephosphorylates pseudouridine 5'-phosphate, a potential intermediate in rRNA degradation. Pseudouridine is then excreted intact in urine.</text>
</comment>
<comment type="catalytic activity">
    <reaction>
        <text>psi-UMP + H2O = pseudouridine + phosphate</text>
        <dbReference type="Rhea" id="RHEA:10944"/>
        <dbReference type="ChEBI" id="CHEBI:15377"/>
        <dbReference type="ChEBI" id="CHEBI:17802"/>
        <dbReference type="ChEBI" id="CHEBI:43474"/>
        <dbReference type="ChEBI" id="CHEBI:58380"/>
        <dbReference type="EC" id="3.1.3.96"/>
    </reaction>
</comment>
<comment type="cofactor">
    <cofactor evidence="2">
        <name>Mg(2+)</name>
        <dbReference type="ChEBI" id="CHEBI:18420"/>
    </cofactor>
</comment>
<comment type="similarity">
    <text evidence="3">Belongs to the HAD-like hydrolase superfamily. CbbY/CbbZ/Gph/YieH family.</text>
</comment>
<reference key="1">
    <citation type="journal article" date="2005" name="Science">
        <title>The transcriptional landscape of the mammalian genome.</title>
        <authorList>
            <person name="Carninci P."/>
            <person name="Kasukawa T."/>
            <person name="Katayama S."/>
            <person name="Gough J."/>
            <person name="Frith M.C."/>
            <person name="Maeda N."/>
            <person name="Oyama R."/>
            <person name="Ravasi T."/>
            <person name="Lenhard B."/>
            <person name="Wells C."/>
            <person name="Kodzius R."/>
            <person name="Shimokawa K."/>
            <person name="Bajic V.B."/>
            <person name="Brenner S.E."/>
            <person name="Batalov S."/>
            <person name="Forrest A.R."/>
            <person name="Zavolan M."/>
            <person name="Davis M.J."/>
            <person name="Wilming L.G."/>
            <person name="Aidinis V."/>
            <person name="Allen J.E."/>
            <person name="Ambesi-Impiombato A."/>
            <person name="Apweiler R."/>
            <person name="Aturaliya R.N."/>
            <person name="Bailey T.L."/>
            <person name="Bansal M."/>
            <person name="Baxter L."/>
            <person name="Beisel K.W."/>
            <person name="Bersano T."/>
            <person name="Bono H."/>
            <person name="Chalk A.M."/>
            <person name="Chiu K.P."/>
            <person name="Choudhary V."/>
            <person name="Christoffels A."/>
            <person name="Clutterbuck D.R."/>
            <person name="Crowe M.L."/>
            <person name="Dalla E."/>
            <person name="Dalrymple B.P."/>
            <person name="de Bono B."/>
            <person name="Della Gatta G."/>
            <person name="di Bernardo D."/>
            <person name="Down T."/>
            <person name="Engstrom P."/>
            <person name="Fagiolini M."/>
            <person name="Faulkner G."/>
            <person name="Fletcher C.F."/>
            <person name="Fukushima T."/>
            <person name="Furuno M."/>
            <person name="Futaki S."/>
            <person name="Gariboldi M."/>
            <person name="Georgii-Hemming P."/>
            <person name="Gingeras T.R."/>
            <person name="Gojobori T."/>
            <person name="Green R.E."/>
            <person name="Gustincich S."/>
            <person name="Harbers M."/>
            <person name="Hayashi Y."/>
            <person name="Hensch T.K."/>
            <person name="Hirokawa N."/>
            <person name="Hill D."/>
            <person name="Huminiecki L."/>
            <person name="Iacono M."/>
            <person name="Ikeo K."/>
            <person name="Iwama A."/>
            <person name="Ishikawa T."/>
            <person name="Jakt M."/>
            <person name="Kanapin A."/>
            <person name="Katoh M."/>
            <person name="Kawasawa Y."/>
            <person name="Kelso J."/>
            <person name="Kitamura H."/>
            <person name="Kitano H."/>
            <person name="Kollias G."/>
            <person name="Krishnan S.P."/>
            <person name="Kruger A."/>
            <person name="Kummerfeld S.K."/>
            <person name="Kurochkin I.V."/>
            <person name="Lareau L.F."/>
            <person name="Lazarevic D."/>
            <person name="Lipovich L."/>
            <person name="Liu J."/>
            <person name="Liuni S."/>
            <person name="McWilliam S."/>
            <person name="Madan Babu M."/>
            <person name="Madera M."/>
            <person name="Marchionni L."/>
            <person name="Matsuda H."/>
            <person name="Matsuzawa S."/>
            <person name="Miki H."/>
            <person name="Mignone F."/>
            <person name="Miyake S."/>
            <person name="Morris K."/>
            <person name="Mottagui-Tabar S."/>
            <person name="Mulder N."/>
            <person name="Nakano N."/>
            <person name="Nakauchi H."/>
            <person name="Ng P."/>
            <person name="Nilsson R."/>
            <person name="Nishiguchi S."/>
            <person name="Nishikawa S."/>
            <person name="Nori F."/>
            <person name="Ohara O."/>
            <person name="Okazaki Y."/>
            <person name="Orlando V."/>
            <person name="Pang K.C."/>
            <person name="Pavan W.J."/>
            <person name="Pavesi G."/>
            <person name="Pesole G."/>
            <person name="Petrovsky N."/>
            <person name="Piazza S."/>
            <person name="Reed J."/>
            <person name="Reid J.F."/>
            <person name="Ring B.Z."/>
            <person name="Ringwald M."/>
            <person name="Rost B."/>
            <person name="Ruan Y."/>
            <person name="Salzberg S.L."/>
            <person name="Sandelin A."/>
            <person name="Schneider C."/>
            <person name="Schoenbach C."/>
            <person name="Sekiguchi K."/>
            <person name="Semple C.A."/>
            <person name="Seno S."/>
            <person name="Sessa L."/>
            <person name="Sheng Y."/>
            <person name="Shibata Y."/>
            <person name="Shimada H."/>
            <person name="Shimada K."/>
            <person name="Silva D."/>
            <person name="Sinclair B."/>
            <person name="Sperling S."/>
            <person name="Stupka E."/>
            <person name="Sugiura K."/>
            <person name="Sultana R."/>
            <person name="Takenaka Y."/>
            <person name="Taki K."/>
            <person name="Tammoja K."/>
            <person name="Tan S.L."/>
            <person name="Tang S."/>
            <person name="Taylor M.S."/>
            <person name="Tegner J."/>
            <person name="Teichmann S.A."/>
            <person name="Ueda H.R."/>
            <person name="van Nimwegen E."/>
            <person name="Verardo R."/>
            <person name="Wei C.L."/>
            <person name="Yagi K."/>
            <person name="Yamanishi H."/>
            <person name="Zabarovsky E."/>
            <person name="Zhu S."/>
            <person name="Zimmer A."/>
            <person name="Hide W."/>
            <person name="Bult C."/>
            <person name="Grimmond S.M."/>
            <person name="Teasdale R.D."/>
            <person name="Liu E.T."/>
            <person name="Brusic V."/>
            <person name="Quackenbush J."/>
            <person name="Wahlestedt C."/>
            <person name="Mattick J.S."/>
            <person name="Hume D.A."/>
            <person name="Kai C."/>
            <person name="Sasaki D."/>
            <person name="Tomaru Y."/>
            <person name="Fukuda S."/>
            <person name="Kanamori-Katayama M."/>
            <person name="Suzuki M."/>
            <person name="Aoki J."/>
            <person name="Arakawa T."/>
            <person name="Iida J."/>
            <person name="Imamura K."/>
            <person name="Itoh M."/>
            <person name="Kato T."/>
            <person name="Kawaji H."/>
            <person name="Kawagashira N."/>
            <person name="Kawashima T."/>
            <person name="Kojima M."/>
            <person name="Kondo S."/>
            <person name="Konno H."/>
            <person name="Nakano K."/>
            <person name="Ninomiya N."/>
            <person name="Nishio T."/>
            <person name="Okada M."/>
            <person name="Plessy C."/>
            <person name="Shibata K."/>
            <person name="Shiraki T."/>
            <person name="Suzuki S."/>
            <person name="Tagami M."/>
            <person name="Waki K."/>
            <person name="Watahiki A."/>
            <person name="Okamura-Oho Y."/>
            <person name="Suzuki H."/>
            <person name="Kawai J."/>
            <person name="Hayashizaki Y."/>
        </authorList>
    </citation>
    <scope>NUCLEOTIDE SEQUENCE [LARGE SCALE MRNA]</scope>
    <source>
        <strain>C57BL/6J</strain>
        <tissue>Testis</tissue>
    </source>
</reference>
<reference key="2">
    <citation type="journal article" date="2004" name="Genome Res.">
        <title>The status, quality, and expansion of the NIH full-length cDNA project: the Mammalian Gene Collection (MGC).</title>
        <authorList>
            <consortium name="The MGC Project Team"/>
        </authorList>
    </citation>
    <scope>NUCLEOTIDE SEQUENCE [LARGE SCALE MRNA]</scope>
    <source>
        <tissue>Testis</tissue>
    </source>
</reference>
<reference key="3">
    <citation type="journal article" date="2010" name="Cell">
        <title>A tissue-specific atlas of mouse protein phosphorylation and expression.</title>
        <authorList>
            <person name="Huttlin E.L."/>
            <person name="Jedrychowski M.P."/>
            <person name="Elias J.E."/>
            <person name="Goswami T."/>
            <person name="Rad R."/>
            <person name="Beausoleil S.A."/>
            <person name="Villen J."/>
            <person name="Haas W."/>
            <person name="Sowa M.E."/>
            <person name="Gygi S.P."/>
        </authorList>
    </citation>
    <scope>IDENTIFICATION BY MASS SPECTROMETRY [LARGE SCALE ANALYSIS]</scope>
    <source>
        <tissue>Testis</tissue>
    </source>
</reference>
<feature type="chain" id="PRO_0000320103" description="Pseudouridine-5'-phosphatase">
    <location>
        <begin position="1"/>
        <end position="234"/>
    </location>
</feature>
<feature type="active site" description="Nucleophile" evidence="1">
    <location>
        <position position="19"/>
    </location>
</feature>
<feature type="active site" description="Proton donor" evidence="1">
    <location>
        <position position="21"/>
    </location>
</feature>
<feature type="binding site" evidence="1">
    <location>
        <position position="19"/>
    </location>
    <ligand>
        <name>Mg(2+)</name>
        <dbReference type="ChEBI" id="CHEBI:18420"/>
    </ligand>
</feature>
<feature type="binding site" evidence="1">
    <location>
        <position position="21"/>
    </location>
    <ligand>
        <name>Mg(2+)</name>
        <dbReference type="ChEBI" id="CHEBI:18420"/>
    </ligand>
</feature>
<feature type="sequence conflict" description="In Ref. 1; BAB24906." evidence="3" ref="1">
    <original>AAA</original>
    <variation>GGG</variation>
    <location>
        <begin position="2"/>
        <end position="4"/>
    </location>
</feature>
<feature type="sequence conflict" description="In Ref. 1; BAB24906 and 2; AAH48447." evidence="3" ref="1 2">
    <original>P</original>
    <variation>H</variation>
    <location>
        <position position="15"/>
    </location>
</feature>
<feature type="sequence conflict" description="In Ref. 1; BAB24906." evidence="3" ref="1">
    <original>LDGL</original>
    <variation>REGF</variation>
    <location>
        <begin position="20"/>
        <end position="23"/>
    </location>
</feature>
<feature type="sequence conflict" description="In Ref. 1; BAB24906." evidence="3" ref="1">
    <original>L</original>
    <variation>Q</variation>
    <location>
        <position position="214"/>
    </location>
</feature>
<gene>
    <name evidence="2" type="primary">Pudp</name>
    <name type="synonym">Hdhd1</name>
    <name evidence="4" type="synonym">Hdhd1a</name>
</gene>
<evidence type="ECO:0000250" key="1"/>
<evidence type="ECO:0000250" key="2">
    <source>
        <dbReference type="UniProtKB" id="Q08623"/>
    </source>
</evidence>
<evidence type="ECO:0000305" key="3"/>
<evidence type="ECO:0000312" key="4">
    <source>
        <dbReference type="MGI" id="MGI:1914615"/>
    </source>
</evidence>
<organism>
    <name type="scientific">Mus musculus</name>
    <name type="common">Mouse</name>
    <dbReference type="NCBI Taxonomy" id="10090"/>
    <lineage>
        <taxon>Eukaryota</taxon>
        <taxon>Metazoa</taxon>
        <taxon>Chordata</taxon>
        <taxon>Craniata</taxon>
        <taxon>Vertebrata</taxon>
        <taxon>Euteleostomi</taxon>
        <taxon>Mammalia</taxon>
        <taxon>Eutheria</taxon>
        <taxon>Euarchontoglires</taxon>
        <taxon>Glires</taxon>
        <taxon>Rodentia</taxon>
        <taxon>Myomorpha</taxon>
        <taxon>Muroidea</taxon>
        <taxon>Muridae</taxon>
        <taxon>Murinae</taxon>
        <taxon>Mus</taxon>
        <taxon>Mus</taxon>
    </lineage>
</organism>
<protein>
    <recommendedName>
        <fullName evidence="2">Pseudouridine-5'-phosphatase</fullName>
        <ecNumber>3.1.3.96</ecNumber>
    </recommendedName>
    <alternativeName>
        <fullName>Haloacid dehalogenase-like hydrolase domain-containing protein 1</fullName>
    </alternativeName>
    <alternativeName>
        <fullName>Haloacid dehalogenase-like hydrolase domain-containing protein 1A</fullName>
    </alternativeName>
    <alternativeName>
        <fullName>Pseudouridine-5'-monophosphatase</fullName>
        <shortName>5'-PsiMPase</shortName>
    </alternativeName>
</protein>
<name>HDHD1_MOUSE</name>
<proteinExistence type="evidence at protein level"/>
<accession>Q9D5U5</accession>
<accession>Q5RL33</accession>
<accession>Q9D9A0</accession>